<proteinExistence type="evidence at protein level"/>
<gene>
    <name type="primary">LEC</name>
</gene>
<name>LECA_PLEWA</name>
<protein>
    <recommendedName>
        <fullName>Lectin</fullName>
    </recommendedName>
</protein>
<reference key="1">
    <citation type="journal article" date="1993" name="Eur. J. Biochem.">
        <title>Isolation and characterization of a cDNA clone encoding a Pleurodeles lectin.</title>
        <authorList>
            <person name="Tiffoche C."/>
            <person name="Chesnel A."/>
            <person name="Jego P."/>
            <person name="le Pennec J.-P."/>
        </authorList>
    </citation>
    <scope>NUCLEOTIDE SEQUENCE [MRNA]</scope>
    <scope>PROTEIN SEQUENCE OF 21-34 AND 28-53</scope>
    <source>
        <tissue>Oviduct</tissue>
    </source>
</reference>
<keyword id="KW-0903">Direct protein sequencing</keyword>
<keyword id="KW-1015">Disulfide bond</keyword>
<keyword id="KW-0325">Glycoprotein</keyword>
<keyword id="KW-0430">Lectin</keyword>
<keyword id="KW-0964">Secreted</keyword>
<keyword id="KW-0732">Signal</keyword>
<sequence>MVWCLADLRAYVLVLLVISGLYQGSDQLIPEKCGEDCTPGWDCHFNSYYKYIPNAKSWTDAEFYCQKLYPGAHLASIHSEDENDFLTEITFKNNSNYPVVWVGGSDCYKDRSFVWTDGSQWDYQKWRQWEPSNTGGREPCIDFNFVTPGLWNDEHCDQKFPFICKYTTPCRY</sequence>
<accession>Q02988</accession>
<organism>
    <name type="scientific">Pleurodeles waltl</name>
    <name type="common">Iberian ribbed newt</name>
    <dbReference type="NCBI Taxonomy" id="8319"/>
    <lineage>
        <taxon>Eukaryota</taxon>
        <taxon>Metazoa</taxon>
        <taxon>Chordata</taxon>
        <taxon>Craniata</taxon>
        <taxon>Vertebrata</taxon>
        <taxon>Euteleostomi</taxon>
        <taxon>Amphibia</taxon>
        <taxon>Batrachia</taxon>
        <taxon>Caudata</taxon>
        <taxon>Salamandroidea</taxon>
        <taxon>Salamandridae</taxon>
        <taxon>Pleurodelinae</taxon>
        <taxon>Pleurodeles</taxon>
    </lineage>
</organism>
<dbReference type="EMBL" id="X69062">
    <property type="protein sequence ID" value="CAA48800.1"/>
    <property type="molecule type" value="mRNA"/>
</dbReference>
<dbReference type="PIR" id="S32489">
    <property type="entry name" value="S32489"/>
</dbReference>
<dbReference type="SMR" id="Q02988"/>
<dbReference type="MEROPS" id="I63.002"/>
<dbReference type="GlyCosmos" id="Q02988">
    <property type="glycosylation" value="1 site, No reported glycans"/>
</dbReference>
<dbReference type="GO" id="GO:0005576">
    <property type="term" value="C:extracellular region"/>
    <property type="evidence" value="ECO:0007669"/>
    <property type="project" value="UniProtKB-SubCell"/>
</dbReference>
<dbReference type="GO" id="GO:0030246">
    <property type="term" value="F:carbohydrate binding"/>
    <property type="evidence" value="ECO:0007669"/>
    <property type="project" value="UniProtKB-KW"/>
</dbReference>
<dbReference type="CDD" id="cd00037">
    <property type="entry name" value="CLECT"/>
    <property type="match status" value="1"/>
</dbReference>
<dbReference type="Gene3D" id="3.10.100.10">
    <property type="entry name" value="Mannose-Binding Protein A, subunit A"/>
    <property type="match status" value="1"/>
</dbReference>
<dbReference type="InterPro" id="IPR001304">
    <property type="entry name" value="C-type_lectin-like"/>
</dbReference>
<dbReference type="InterPro" id="IPR016186">
    <property type="entry name" value="C-type_lectin-like/link_sf"/>
</dbReference>
<dbReference type="InterPro" id="IPR050111">
    <property type="entry name" value="C-type_lectin/snaclec_domain"/>
</dbReference>
<dbReference type="InterPro" id="IPR018378">
    <property type="entry name" value="C-type_lectin_CS"/>
</dbReference>
<dbReference type="InterPro" id="IPR016187">
    <property type="entry name" value="CTDL_fold"/>
</dbReference>
<dbReference type="PANTHER" id="PTHR22803">
    <property type="entry name" value="MANNOSE, PHOSPHOLIPASE, LECTIN RECEPTOR RELATED"/>
    <property type="match status" value="1"/>
</dbReference>
<dbReference type="Pfam" id="PF00059">
    <property type="entry name" value="Lectin_C"/>
    <property type="match status" value="1"/>
</dbReference>
<dbReference type="PRINTS" id="PR01504">
    <property type="entry name" value="PNCREATITSAP"/>
</dbReference>
<dbReference type="SMART" id="SM00034">
    <property type="entry name" value="CLECT"/>
    <property type="match status" value="1"/>
</dbReference>
<dbReference type="SUPFAM" id="SSF56436">
    <property type="entry name" value="C-type lectin-like"/>
    <property type="match status" value="1"/>
</dbReference>
<dbReference type="PROSITE" id="PS00615">
    <property type="entry name" value="C_TYPE_LECTIN_1"/>
    <property type="match status" value="1"/>
</dbReference>
<dbReference type="PROSITE" id="PS50041">
    <property type="entry name" value="C_TYPE_LECTIN_2"/>
    <property type="match status" value="1"/>
</dbReference>
<feature type="signal peptide" evidence="3">
    <location>
        <begin position="1"/>
        <end position="20"/>
    </location>
</feature>
<feature type="chain" id="PRO_0000017396" description="Lectin">
    <location>
        <begin position="21"/>
        <end position="172"/>
    </location>
</feature>
<feature type="domain" description="C-type lectin" evidence="2">
    <location>
        <begin position="36"/>
        <end position="172"/>
    </location>
</feature>
<feature type="glycosylation site" description="N-linked (GlcNAc...) asparagine" evidence="1">
    <location>
        <position position="93"/>
    </location>
</feature>
<feature type="disulfide bond" evidence="2">
    <location>
        <begin position="65"/>
        <end position="164"/>
    </location>
</feature>
<feature type="disulfide bond" evidence="2">
    <location>
        <begin position="140"/>
        <end position="156"/>
    </location>
</feature>
<comment type="function">
    <text>May be involved in protection of eggs and embryos against microorganisms. Calcium-dependent lectin with specificity to D-glucose and D-glucosamine. Can agglutinate microorganisms in vivo.</text>
</comment>
<comment type="subunit">
    <text evidence="4">Heterodimer.</text>
</comment>
<comment type="subcellular location">
    <subcellularLocation>
        <location>Secreted</location>
    </subcellularLocation>
    <text>Secreted into the inner layer of egg jelly.</text>
</comment>
<comment type="tissue specificity">
    <text>Anterior part of oviduct.</text>
</comment>
<comment type="miscellaneous">
    <text>Protein synthesis increases significantly under estradiol stimulation.</text>
</comment>
<evidence type="ECO:0000255" key="1"/>
<evidence type="ECO:0000255" key="2">
    <source>
        <dbReference type="PROSITE-ProRule" id="PRU00040"/>
    </source>
</evidence>
<evidence type="ECO:0000269" key="3">
    <source>
    </source>
</evidence>
<evidence type="ECO:0000305" key="4"/>